<name>SURE_YERPA</name>
<gene>
    <name evidence="1" type="primary">surE</name>
    <name type="ordered locus">YPA_2785</name>
</gene>
<protein>
    <recommendedName>
        <fullName evidence="1">5'/3'-nucleotidase SurE</fullName>
        <ecNumber evidence="1">3.1.3.5</ecNumber>
        <ecNumber evidence="1">3.1.3.6</ecNumber>
    </recommendedName>
    <alternativeName>
        <fullName evidence="1">Exopolyphosphatase</fullName>
        <ecNumber evidence="1">3.6.1.11</ecNumber>
    </alternativeName>
    <alternativeName>
        <fullName evidence="1">Nucleoside monophosphate phosphohydrolase</fullName>
    </alternativeName>
</protein>
<organism>
    <name type="scientific">Yersinia pestis bv. Antiqua (strain Antiqua)</name>
    <dbReference type="NCBI Taxonomy" id="360102"/>
    <lineage>
        <taxon>Bacteria</taxon>
        <taxon>Pseudomonadati</taxon>
        <taxon>Pseudomonadota</taxon>
        <taxon>Gammaproteobacteria</taxon>
        <taxon>Enterobacterales</taxon>
        <taxon>Yersiniaceae</taxon>
        <taxon>Yersinia</taxon>
    </lineage>
</organism>
<comment type="function">
    <text evidence="1">Nucleotidase with a broad substrate specificity as it can dephosphorylate various ribo- and deoxyribonucleoside 5'-monophosphates and ribonucleoside 3'-monophosphates with highest affinity to 3'-AMP. Also hydrolyzes polyphosphate (exopolyphosphatase activity) with the preference for short-chain-length substrates (P20-25). Might be involved in the regulation of dNTP and NTP pools, and in the turnover of 3'-mononucleotides produced by numerous intracellular RNases (T1, T2, and F) during the degradation of various RNAs.</text>
</comment>
<comment type="catalytic activity">
    <reaction evidence="1">
        <text>a ribonucleoside 5'-phosphate + H2O = a ribonucleoside + phosphate</text>
        <dbReference type="Rhea" id="RHEA:12484"/>
        <dbReference type="ChEBI" id="CHEBI:15377"/>
        <dbReference type="ChEBI" id="CHEBI:18254"/>
        <dbReference type="ChEBI" id="CHEBI:43474"/>
        <dbReference type="ChEBI" id="CHEBI:58043"/>
        <dbReference type="EC" id="3.1.3.5"/>
    </reaction>
</comment>
<comment type="catalytic activity">
    <reaction evidence="1">
        <text>a ribonucleoside 3'-phosphate + H2O = a ribonucleoside + phosphate</text>
        <dbReference type="Rhea" id="RHEA:10144"/>
        <dbReference type="ChEBI" id="CHEBI:13197"/>
        <dbReference type="ChEBI" id="CHEBI:15377"/>
        <dbReference type="ChEBI" id="CHEBI:18254"/>
        <dbReference type="ChEBI" id="CHEBI:43474"/>
        <dbReference type="EC" id="3.1.3.6"/>
    </reaction>
</comment>
<comment type="catalytic activity">
    <reaction evidence="1">
        <text>[phosphate](n) + H2O = [phosphate](n-1) + phosphate + H(+)</text>
        <dbReference type="Rhea" id="RHEA:21528"/>
        <dbReference type="Rhea" id="RHEA-COMP:9859"/>
        <dbReference type="Rhea" id="RHEA-COMP:14279"/>
        <dbReference type="ChEBI" id="CHEBI:15377"/>
        <dbReference type="ChEBI" id="CHEBI:15378"/>
        <dbReference type="ChEBI" id="CHEBI:16838"/>
        <dbReference type="ChEBI" id="CHEBI:43474"/>
        <dbReference type="EC" id="3.6.1.11"/>
    </reaction>
</comment>
<comment type="cofactor">
    <cofactor evidence="1">
        <name>a divalent metal cation</name>
        <dbReference type="ChEBI" id="CHEBI:60240"/>
    </cofactor>
    <text evidence="1">Binds 1 divalent metal cation per subunit.</text>
</comment>
<comment type="subcellular location">
    <subcellularLocation>
        <location evidence="1">Cytoplasm</location>
    </subcellularLocation>
</comment>
<comment type="similarity">
    <text evidence="1">Belongs to the SurE nucleotidase family.</text>
</comment>
<keyword id="KW-0963">Cytoplasm</keyword>
<keyword id="KW-0378">Hydrolase</keyword>
<keyword id="KW-0479">Metal-binding</keyword>
<keyword id="KW-0547">Nucleotide-binding</keyword>
<accession>Q1C475</accession>
<proteinExistence type="inferred from homology"/>
<sequence length="254" mass="27231">MIRILLSNDDGISAPGIQTLASALRGFAQVQIVAPDRNRSGASNALTLDSALRITTLSNGDIAVQQGTPTDCVYLGVNALMRPRPDIVVSGINAGPNLGDDVIYSGTVAAAMEGRHLGYPALAVSLNGHQHYDTAAAVTCRLLRALQRKPLRTGKILNINVPDLPLAEIKGIRVTRCGSRHPAEQVFCQQDPRGQDLYWIGPPGEKYDAGPDTDFAAVEQGYVSITPLQVDLTAYMAQEVVESWLANTEVDGEW</sequence>
<feature type="chain" id="PRO_1000007803" description="5'/3'-nucleotidase SurE">
    <location>
        <begin position="1"/>
        <end position="254"/>
    </location>
</feature>
<feature type="binding site" evidence="1">
    <location>
        <position position="9"/>
    </location>
    <ligand>
        <name>a divalent metal cation</name>
        <dbReference type="ChEBI" id="CHEBI:60240"/>
    </ligand>
</feature>
<feature type="binding site" evidence="1">
    <location>
        <position position="10"/>
    </location>
    <ligand>
        <name>a divalent metal cation</name>
        <dbReference type="ChEBI" id="CHEBI:60240"/>
    </ligand>
</feature>
<feature type="binding site" evidence="1">
    <location>
        <position position="40"/>
    </location>
    <ligand>
        <name>a divalent metal cation</name>
        <dbReference type="ChEBI" id="CHEBI:60240"/>
    </ligand>
</feature>
<feature type="binding site" evidence="1">
    <location>
        <position position="93"/>
    </location>
    <ligand>
        <name>a divalent metal cation</name>
        <dbReference type="ChEBI" id="CHEBI:60240"/>
    </ligand>
</feature>
<reference key="1">
    <citation type="journal article" date="2006" name="J. Bacteriol.">
        <title>Complete genome sequence of Yersinia pestis strains Antiqua and Nepal516: evidence of gene reduction in an emerging pathogen.</title>
        <authorList>
            <person name="Chain P.S.G."/>
            <person name="Hu P."/>
            <person name="Malfatti S.A."/>
            <person name="Radnedge L."/>
            <person name="Larimer F."/>
            <person name="Vergez L.M."/>
            <person name="Worsham P."/>
            <person name="Chu M.C."/>
            <person name="Andersen G.L."/>
        </authorList>
    </citation>
    <scope>NUCLEOTIDE SEQUENCE [LARGE SCALE GENOMIC DNA]</scope>
    <source>
        <strain>Antiqua</strain>
    </source>
</reference>
<evidence type="ECO:0000255" key="1">
    <source>
        <dbReference type="HAMAP-Rule" id="MF_00060"/>
    </source>
</evidence>
<dbReference type="EC" id="3.1.3.5" evidence="1"/>
<dbReference type="EC" id="3.1.3.6" evidence="1"/>
<dbReference type="EC" id="3.6.1.11" evidence="1"/>
<dbReference type="EMBL" id="CP000308">
    <property type="protein sequence ID" value="ABG14747.1"/>
    <property type="molecule type" value="Genomic_DNA"/>
</dbReference>
<dbReference type="RefSeq" id="WP_002209394.1">
    <property type="nucleotide sequence ID" value="NZ_CP009906.1"/>
</dbReference>
<dbReference type="SMR" id="Q1C475"/>
<dbReference type="GeneID" id="57975351"/>
<dbReference type="KEGG" id="ypa:YPA_2785"/>
<dbReference type="Proteomes" id="UP000001971">
    <property type="component" value="Chromosome"/>
</dbReference>
<dbReference type="GO" id="GO:0005737">
    <property type="term" value="C:cytoplasm"/>
    <property type="evidence" value="ECO:0007669"/>
    <property type="project" value="UniProtKB-SubCell"/>
</dbReference>
<dbReference type="GO" id="GO:0008254">
    <property type="term" value="F:3'-nucleotidase activity"/>
    <property type="evidence" value="ECO:0007669"/>
    <property type="project" value="UniProtKB-UniRule"/>
</dbReference>
<dbReference type="GO" id="GO:0008253">
    <property type="term" value="F:5'-nucleotidase activity"/>
    <property type="evidence" value="ECO:0007669"/>
    <property type="project" value="UniProtKB-UniRule"/>
</dbReference>
<dbReference type="GO" id="GO:0004309">
    <property type="term" value="F:exopolyphosphatase activity"/>
    <property type="evidence" value="ECO:0007669"/>
    <property type="project" value="UniProtKB-UniRule"/>
</dbReference>
<dbReference type="GO" id="GO:0046872">
    <property type="term" value="F:metal ion binding"/>
    <property type="evidence" value="ECO:0007669"/>
    <property type="project" value="UniProtKB-UniRule"/>
</dbReference>
<dbReference type="GO" id="GO:0000166">
    <property type="term" value="F:nucleotide binding"/>
    <property type="evidence" value="ECO:0007669"/>
    <property type="project" value="UniProtKB-KW"/>
</dbReference>
<dbReference type="FunFam" id="3.40.1210.10:FF:000001">
    <property type="entry name" value="5'/3'-nucleotidase SurE"/>
    <property type="match status" value="1"/>
</dbReference>
<dbReference type="Gene3D" id="3.40.1210.10">
    <property type="entry name" value="Survival protein SurE-like phosphatase/nucleotidase"/>
    <property type="match status" value="1"/>
</dbReference>
<dbReference type="HAMAP" id="MF_00060">
    <property type="entry name" value="SurE"/>
    <property type="match status" value="1"/>
</dbReference>
<dbReference type="InterPro" id="IPR030048">
    <property type="entry name" value="SurE"/>
</dbReference>
<dbReference type="InterPro" id="IPR002828">
    <property type="entry name" value="SurE-like_Pase/nucleotidase"/>
</dbReference>
<dbReference type="InterPro" id="IPR036523">
    <property type="entry name" value="SurE-like_sf"/>
</dbReference>
<dbReference type="NCBIfam" id="NF001488">
    <property type="entry name" value="PRK00346.1-1"/>
    <property type="match status" value="1"/>
</dbReference>
<dbReference type="NCBIfam" id="NF001489">
    <property type="entry name" value="PRK00346.1-3"/>
    <property type="match status" value="1"/>
</dbReference>
<dbReference type="NCBIfam" id="NF001490">
    <property type="entry name" value="PRK00346.1-4"/>
    <property type="match status" value="1"/>
</dbReference>
<dbReference type="NCBIfam" id="TIGR00087">
    <property type="entry name" value="surE"/>
    <property type="match status" value="1"/>
</dbReference>
<dbReference type="PANTHER" id="PTHR30457">
    <property type="entry name" value="5'-NUCLEOTIDASE SURE"/>
    <property type="match status" value="1"/>
</dbReference>
<dbReference type="PANTHER" id="PTHR30457:SF12">
    <property type="entry name" value="5'_3'-NUCLEOTIDASE SURE"/>
    <property type="match status" value="1"/>
</dbReference>
<dbReference type="Pfam" id="PF01975">
    <property type="entry name" value="SurE"/>
    <property type="match status" value="1"/>
</dbReference>
<dbReference type="SUPFAM" id="SSF64167">
    <property type="entry name" value="SurE-like"/>
    <property type="match status" value="1"/>
</dbReference>